<protein>
    <recommendedName>
        <fullName evidence="1">ATP synthase subunit beta</fullName>
        <ecNumber evidence="1">7.1.2.2</ecNumber>
    </recommendedName>
    <alternativeName>
        <fullName evidence="1">ATP synthase F1 sector subunit beta</fullName>
    </alternativeName>
    <alternativeName>
        <fullName evidence="1">F-ATPase subunit beta</fullName>
    </alternativeName>
</protein>
<gene>
    <name evidence="1" type="primary">atpD</name>
    <name type="ordered locus">mhp055</name>
</gene>
<keyword id="KW-0066">ATP synthesis</keyword>
<keyword id="KW-0067">ATP-binding</keyword>
<keyword id="KW-1003">Cell membrane</keyword>
<keyword id="KW-0139">CF(1)</keyword>
<keyword id="KW-0375">Hydrogen ion transport</keyword>
<keyword id="KW-0406">Ion transport</keyword>
<keyword id="KW-0472">Membrane</keyword>
<keyword id="KW-0547">Nucleotide-binding</keyword>
<keyword id="KW-1278">Translocase</keyword>
<keyword id="KW-0813">Transport</keyword>
<accession>Q601Z5</accession>
<sequence length="471" mass="51559">MEKQENVGHIVQIFGPVIDVQFPNEHMPAILSALEVKINDESIIFEVAQHLGEGIVRAIAMSMTYNLSKGLEVYDTGSQISVPVGKQVLSRMFNVLGQPIDGGKPLDSFIKNPIHANAPTYLEQKATSEILVTGIKVIDLLIPFIKGGKIGLFGGAGVGKTVLVQELINNIASKHGGLSVFAGVGERSREGNDLYFEMKKAGVLDKTALVFGQMNEPPGARMRVALSALTMAEYFRDYENQDVLLFIDNIFRFTQAGSEVSTLLGRIPSTVGYQPTLSTEMGQLQERITSTIRGSITSVQAVYVPADDITDPAPATTFSHLDAKTVLDRGIAALGIYPAVDPLASSSRALEPNIVGKKHYLVAKKVVQILQRFKELQDIIAILGVDELSESDKQVVARARRIRNFLSQPFFVAQKFSGIQGQFIKIQDTVNNFDELLSGKYDNIPEEAFLYVGTIDQALEKAKKMGWSEKN</sequence>
<dbReference type="EC" id="7.1.2.2" evidence="1"/>
<dbReference type="EMBL" id="AE017332">
    <property type="protein sequence ID" value="AAV27380.1"/>
    <property type="molecule type" value="Genomic_DNA"/>
</dbReference>
<dbReference type="RefSeq" id="WP_011205894.1">
    <property type="nucleotide sequence ID" value="NC_006360.1"/>
</dbReference>
<dbReference type="SMR" id="Q601Z5"/>
<dbReference type="KEGG" id="mhy:mhp055"/>
<dbReference type="eggNOG" id="COG0055">
    <property type="taxonomic scope" value="Bacteria"/>
</dbReference>
<dbReference type="HOGENOM" id="CLU_022398_0_2_14"/>
<dbReference type="PhylomeDB" id="Q601Z5"/>
<dbReference type="Proteomes" id="UP000006822">
    <property type="component" value="Chromosome"/>
</dbReference>
<dbReference type="GO" id="GO:0005886">
    <property type="term" value="C:plasma membrane"/>
    <property type="evidence" value="ECO:0007669"/>
    <property type="project" value="UniProtKB-SubCell"/>
</dbReference>
<dbReference type="GO" id="GO:0045259">
    <property type="term" value="C:proton-transporting ATP synthase complex"/>
    <property type="evidence" value="ECO:0007669"/>
    <property type="project" value="UniProtKB-KW"/>
</dbReference>
<dbReference type="GO" id="GO:0005524">
    <property type="term" value="F:ATP binding"/>
    <property type="evidence" value="ECO:0007669"/>
    <property type="project" value="UniProtKB-UniRule"/>
</dbReference>
<dbReference type="GO" id="GO:0016887">
    <property type="term" value="F:ATP hydrolysis activity"/>
    <property type="evidence" value="ECO:0007669"/>
    <property type="project" value="InterPro"/>
</dbReference>
<dbReference type="GO" id="GO:0046933">
    <property type="term" value="F:proton-transporting ATP synthase activity, rotational mechanism"/>
    <property type="evidence" value="ECO:0007669"/>
    <property type="project" value="UniProtKB-UniRule"/>
</dbReference>
<dbReference type="CDD" id="cd18110">
    <property type="entry name" value="ATP-synt_F1_beta_C"/>
    <property type="match status" value="1"/>
</dbReference>
<dbReference type="CDD" id="cd18115">
    <property type="entry name" value="ATP-synt_F1_beta_N"/>
    <property type="match status" value="1"/>
</dbReference>
<dbReference type="CDD" id="cd01133">
    <property type="entry name" value="F1-ATPase_beta_CD"/>
    <property type="match status" value="1"/>
</dbReference>
<dbReference type="FunFam" id="1.10.1140.10:FF:000001">
    <property type="entry name" value="ATP synthase subunit beta"/>
    <property type="match status" value="1"/>
</dbReference>
<dbReference type="FunFam" id="3.40.50.300:FF:000004">
    <property type="entry name" value="ATP synthase subunit beta"/>
    <property type="match status" value="1"/>
</dbReference>
<dbReference type="Gene3D" id="2.40.10.170">
    <property type="match status" value="1"/>
</dbReference>
<dbReference type="Gene3D" id="1.10.1140.10">
    <property type="entry name" value="Bovine Mitochondrial F1-atpase, Atp Synthase Beta Chain, Chain D, domain 3"/>
    <property type="match status" value="1"/>
</dbReference>
<dbReference type="Gene3D" id="3.40.50.300">
    <property type="entry name" value="P-loop containing nucleotide triphosphate hydrolases"/>
    <property type="match status" value="1"/>
</dbReference>
<dbReference type="HAMAP" id="MF_01347">
    <property type="entry name" value="ATP_synth_beta_bact"/>
    <property type="match status" value="1"/>
</dbReference>
<dbReference type="InterPro" id="IPR003593">
    <property type="entry name" value="AAA+_ATPase"/>
</dbReference>
<dbReference type="InterPro" id="IPR055190">
    <property type="entry name" value="ATP-synt_VA_C"/>
</dbReference>
<dbReference type="InterPro" id="IPR005722">
    <property type="entry name" value="ATP_synth_F1_bsu"/>
</dbReference>
<dbReference type="InterPro" id="IPR020003">
    <property type="entry name" value="ATPase_a/bsu_AS"/>
</dbReference>
<dbReference type="InterPro" id="IPR050053">
    <property type="entry name" value="ATPase_alpha/beta_chains"/>
</dbReference>
<dbReference type="InterPro" id="IPR004100">
    <property type="entry name" value="ATPase_F1/V1/A1_a/bsu_N"/>
</dbReference>
<dbReference type="InterPro" id="IPR036121">
    <property type="entry name" value="ATPase_F1/V1/A1_a/bsu_N_sf"/>
</dbReference>
<dbReference type="InterPro" id="IPR000194">
    <property type="entry name" value="ATPase_F1/V1/A1_a/bsu_nucl-bd"/>
</dbReference>
<dbReference type="InterPro" id="IPR024034">
    <property type="entry name" value="ATPase_F1/V1_b/a_C"/>
</dbReference>
<dbReference type="InterPro" id="IPR027417">
    <property type="entry name" value="P-loop_NTPase"/>
</dbReference>
<dbReference type="NCBIfam" id="TIGR01039">
    <property type="entry name" value="atpD"/>
    <property type="match status" value="1"/>
</dbReference>
<dbReference type="PANTHER" id="PTHR15184">
    <property type="entry name" value="ATP SYNTHASE"/>
    <property type="match status" value="1"/>
</dbReference>
<dbReference type="PANTHER" id="PTHR15184:SF71">
    <property type="entry name" value="ATP SYNTHASE SUBUNIT BETA, MITOCHONDRIAL"/>
    <property type="match status" value="1"/>
</dbReference>
<dbReference type="Pfam" id="PF00006">
    <property type="entry name" value="ATP-synt_ab"/>
    <property type="match status" value="1"/>
</dbReference>
<dbReference type="Pfam" id="PF02874">
    <property type="entry name" value="ATP-synt_ab_N"/>
    <property type="match status" value="1"/>
</dbReference>
<dbReference type="Pfam" id="PF22919">
    <property type="entry name" value="ATP-synt_VA_C"/>
    <property type="match status" value="1"/>
</dbReference>
<dbReference type="SMART" id="SM00382">
    <property type="entry name" value="AAA"/>
    <property type="match status" value="1"/>
</dbReference>
<dbReference type="SUPFAM" id="SSF47917">
    <property type="entry name" value="C-terminal domain of alpha and beta subunits of F1 ATP synthase"/>
    <property type="match status" value="1"/>
</dbReference>
<dbReference type="SUPFAM" id="SSF50615">
    <property type="entry name" value="N-terminal domain of alpha and beta subunits of F1 ATP synthase"/>
    <property type="match status" value="1"/>
</dbReference>
<dbReference type="SUPFAM" id="SSF52540">
    <property type="entry name" value="P-loop containing nucleoside triphosphate hydrolases"/>
    <property type="match status" value="1"/>
</dbReference>
<dbReference type="PROSITE" id="PS00152">
    <property type="entry name" value="ATPASE_ALPHA_BETA"/>
    <property type="match status" value="1"/>
</dbReference>
<feature type="chain" id="PRO_0000254302" description="ATP synthase subunit beta">
    <location>
        <begin position="1"/>
        <end position="471"/>
    </location>
</feature>
<feature type="binding site" evidence="1">
    <location>
        <begin position="154"/>
        <end position="161"/>
    </location>
    <ligand>
        <name>ATP</name>
        <dbReference type="ChEBI" id="CHEBI:30616"/>
    </ligand>
</feature>
<reference key="1">
    <citation type="journal article" date="2004" name="J. Bacteriol.">
        <title>The genome sequence of Mycoplasma hyopneumoniae strain 232, the agent of swine mycoplasmosis.</title>
        <authorList>
            <person name="Minion F.C."/>
            <person name="Lefkowitz E.J."/>
            <person name="Madsen M.L."/>
            <person name="Cleary B.J."/>
            <person name="Swartzell S.M."/>
            <person name="Mahairas G.G."/>
        </authorList>
    </citation>
    <scope>NUCLEOTIDE SEQUENCE [LARGE SCALE GENOMIC DNA]</scope>
    <source>
        <strain>232</strain>
    </source>
</reference>
<proteinExistence type="inferred from homology"/>
<comment type="function">
    <text evidence="1">Produces ATP from ADP in the presence of a proton gradient across the membrane. The catalytic sites are hosted primarily by the beta subunits.</text>
</comment>
<comment type="catalytic activity">
    <reaction evidence="1">
        <text>ATP + H2O + 4 H(+)(in) = ADP + phosphate + 5 H(+)(out)</text>
        <dbReference type="Rhea" id="RHEA:57720"/>
        <dbReference type="ChEBI" id="CHEBI:15377"/>
        <dbReference type="ChEBI" id="CHEBI:15378"/>
        <dbReference type="ChEBI" id="CHEBI:30616"/>
        <dbReference type="ChEBI" id="CHEBI:43474"/>
        <dbReference type="ChEBI" id="CHEBI:456216"/>
        <dbReference type="EC" id="7.1.2.2"/>
    </reaction>
</comment>
<comment type="subunit">
    <text evidence="1">F-type ATPases have 2 components, CF(1) - the catalytic core - and CF(0) - the membrane proton channel. CF(1) has five subunits: alpha(3), beta(3), gamma(1), delta(1), epsilon(1). CF(0) has three main subunits: a(1), b(2) and c(9-12). The alpha and beta chains form an alternating ring which encloses part of the gamma chain. CF(1) is attached to CF(0) by a central stalk formed by the gamma and epsilon chains, while a peripheral stalk is formed by the delta and b chains.</text>
</comment>
<comment type="subcellular location">
    <subcellularLocation>
        <location evidence="1">Cell membrane</location>
        <topology evidence="1">Peripheral membrane protein</topology>
    </subcellularLocation>
</comment>
<comment type="similarity">
    <text evidence="1">Belongs to the ATPase alpha/beta chains family.</text>
</comment>
<name>ATPB_MESH2</name>
<evidence type="ECO:0000255" key="1">
    <source>
        <dbReference type="HAMAP-Rule" id="MF_01347"/>
    </source>
</evidence>
<organism>
    <name type="scientific">Mesomycoplasma hyopneumoniae (strain 232)</name>
    <name type="common">Mycoplasma hyopneumoniae</name>
    <dbReference type="NCBI Taxonomy" id="295358"/>
    <lineage>
        <taxon>Bacteria</taxon>
        <taxon>Bacillati</taxon>
        <taxon>Mycoplasmatota</taxon>
        <taxon>Mycoplasmoidales</taxon>
        <taxon>Metamycoplasmataceae</taxon>
        <taxon>Mesomycoplasma</taxon>
    </lineage>
</organism>